<accession>P0DSJ7</accession>
<protein>
    <recommendedName>
        <fullName evidence="3">U-myrmeciitoxin(01)-Mg4b</fullName>
        <shortName evidence="2">MIITX(01)-Mg4b</shortName>
        <shortName evidence="3">U-MIITX(01)-Mg4b</shortName>
    </recommendedName>
</protein>
<reference key="1">
    <citation type="journal article" date="2018" name="Sci. Adv.">
        <title>A comprehensive portrait of the venom of the giant red bull ant, Myrmecia gulosa, reveals a hyperdiverse hymenopteran toxin gene family.</title>
        <authorList>
            <person name="Robinson S.D."/>
            <person name="Mueller A."/>
            <person name="Clayton D."/>
            <person name="Starobova H."/>
            <person name="Hamilton B.R."/>
            <person name="Payne R.J."/>
            <person name="Vetter I."/>
            <person name="King G.F."/>
            <person name="Undheim E.A.B."/>
        </authorList>
    </citation>
    <scope>NUCLEOTIDE SEQUENCE [MRNA]</scope>
    <source>
        <tissue>Venom gland</tissue>
    </source>
</reference>
<name>TX14B_MYRGU</name>
<dbReference type="GO" id="GO:0005576">
    <property type="term" value="C:extracellular region"/>
    <property type="evidence" value="ECO:0007669"/>
    <property type="project" value="UniProtKB-SubCell"/>
</dbReference>
<dbReference type="GO" id="GO:0090729">
    <property type="term" value="F:toxin activity"/>
    <property type="evidence" value="ECO:0007669"/>
    <property type="project" value="UniProtKB-KW"/>
</dbReference>
<keyword id="KW-1015">Disulfide bond</keyword>
<keyword id="KW-0964">Secreted</keyword>
<keyword id="KW-0732">Signal</keyword>
<keyword id="KW-0800">Toxin</keyword>
<organism>
    <name type="scientific">Myrmecia gulosa</name>
    <name type="common">Red bulldog ant</name>
    <dbReference type="NCBI Taxonomy" id="36170"/>
    <lineage>
        <taxon>Eukaryota</taxon>
        <taxon>Metazoa</taxon>
        <taxon>Ecdysozoa</taxon>
        <taxon>Arthropoda</taxon>
        <taxon>Hexapoda</taxon>
        <taxon>Insecta</taxon>
        <taxon>Pterygota</taxon>
        <taxon>Neoptera</taxon>
        <taxon>Endopterygota</taxon>
        <taxon>Hymenoptera</taxon>
        <taxon>Apocrita</taxon>
        <taxon>Aculeata</taxon>
        <taxon>Formicoidea</taxon>
        <taxon>Formicidae</taxon>
        <taxon>Myrmeciinae</taxon>
        <taxon>Myrmeciini</taxon>
        <taxon>Myrmecia</taxon>
    </lineage>
</organism>
<feature type="signal peptide" evidence="1">
    <location>
        <begin position="1"/>
        <end position="25"/>
    </location>
</feature>
<feature type="chain" id="PRO_0000447074" description="U-myrmeciitoxin(01)-Mg4b" evidence="1">
    <location>
        <begin position="26"/>
        <end position="64"/>
    </location>
</feature>
<sequence>MGKIFFFVLMIAIIGSTFLIEEALGSLVGCPRPNFLPSWNRCKCICKNNKPMCRKLPNLLKTTA</sequence>
<evidence type="ECO:0000250" key="1">
    <source>
        <dbReference type="UniProtKB" id="P0DPU9"/>
    </source>
</evidence>
<evidence type="ECO:0000303" key="2">
    <source>
    </source>
</evidence>
<evidence type="ECO:0000305" key="3"/>
<evidence type="ECO:0000305" key="4">
    <source>
    </source>
</evidence>
<proteinExistence type="inferred from homology"/>
<comment type="function">
    <text evidence="3">May have antimicrobial properties, like most ant linear peptides.</text>
</comment>
<comment type="subunit">
    <text evidence="1">Homodimer; disulfide-linked.</text>
</comment>
<comment type="subcellular location">
    <subcellularLocation>
        <location evidence="4">Secreted</location>
    </subcellularLocation>
</comment>
<comment type="tissue specificity">
    <text evidence="4">Expressed by the venom gland.</text>
</comment>
<comment type="PTM">
    <text evidence="3">Contains 2 intrachain disulfide bonds (per chain) and 1 interchain disulfide bond.</text>
</comment>
<comment type="miscellaneous">
    <text evidence="4">Not detected in the venom.</text>
</comment>
<comment type="similarity">
    <text evidence="3">Belongs to the ant myrmeciitoxin-01 family.</text>
</comment>
<comment type="online information" name="National Center for Biotechnology Information (NCBI)">
    <link uri="https://www.ncbi.nlm.nih.gov/nuccore/GGFG01000005"/>
</comment>